<keyword id="KW-0687">Ribonucleoprotein</keyword>
<keyword id="KW-0689">Ribosomal protein</keyword>
<keyword id="KW-0694">RNA-binding</keyword>
<keyword id="KW-0699">rRNA-binding</keyword>
<feature type="chain" id="PRO_1000055674" description="Large ribosomal subunit protein uL14">
    <location>
        <begin position="1"/>
        <end position="121"/>
    </location>
</feature>
<dbReference type="EMBL" id="CP000388">
    <property type="protein sequence ID" value="ABG39525.1"/>
    <property type="molecule type" value="Genomic_DNA"/>
</dbReference>
<dbReference type="RefSeq" id="WP_006990572.1">
    <property type="nucleotide sequence ID" value="NC_008228.1"/>
</dbReference>
<dbReference type="SMR" id="Q15X63"/>
<dbReference type="STRING" id="342610.Patl_0999"/>
<dbReference type="KEGG" id="pat:Patl_0999"/>
<dbReference type="eggNOG" id="COG0093">
    <property type="taxonomic scope" value="Bacteria"/>
</dbReference>
<dbReference type="HOGENOM" id="CLU_095071_2_1_6"/>
<dbReference type="OrthoDB" id="9806379at2"/>
<dbReference type="Proteomes" id="UP000001981">
    <property type="component" value="Chromosome"/>
</dbReference>
<dbReference type="GO" id="GO:0022625">
    <property type="term" value="C:cytosolic large ribosomal subunit"/>
    <property type="evidence" value="ECO:0007669"/>
    <property type="project" value="TreeGrafter"/>
</dbReference>
<dbReference type="GO" id="GO:0070180">
    <property type="term" value="F:large ribosomal subunit rRNA binding"/>
    <property type="evidence" value="ECO:0007669"/>
    <property type="project" value="TreeGrafter"/>
</dbReference>
<dbReference type="GO" id="GO:0003735">
    <property type="term" value="F:structural constituent of ribosome"/>
    <property type="evidence" value="ECO:0007669"/>
    <property type="project" value="InterPro"/>
</dbReference>
<dbReference type="GO" id="GO:0006412">
    <property type="term" value="P:translation"/>
    <property type="evidence" value="ECO:0007669"/>
    <property type="project" value="UniProtKB-UniRule"/>
</dbReference>
<dbReference type="CDD" id="cd00337">
    <property type="entry name" value="Ribosomal_uL14"/>
    <property type="match status" value="1"/>
</dbReference>
<dbReference type="FunFam" id="2.40.150.20:FF:000001">
    <property type="entry name" value="50S ribosomal protein L14"/>
    <property type="match status" value="1"/>
</dbReference>
<dbReference type="Gene3D" id="2.40.150.20">
    <property type="entry name" value="Ribosomal protein L14"/>
    <property type="match status" value="1"/>
</dbReference>
<dbReference type="HAMAP" id="MF_01367">
    <property type="entry name" value="Ribosomal_uL14"/>
    <property type="match status" value="1"/>
</dbReference>
<dbReference type="InterPro" id="IPR000218">
    <property type="entry name" value="Ribosomal_uL14"/>
</dbReference>
<dbReference type="InterPro" id="IPR005745">
    <property type="entry name" value="Ribosomal_uL14_bac-type"/>
</dbReference>
<dbReference type="InterPro" id="IPR019972">
    <property type="entry name" value="Ribosomal_uL14_CS"/>
</dbReference>
<dbReference type="InterPro" id="IPR036853">
    <property type="entry name" value="Ribosomal_uL14_sf"/>
</dbReference>
<dbReference type="NCBIfam" id="TIGR01067">
    <property type="entry name" value="rplN_bact"/>
    <property type="match status" value="1"/>
</dbReference>
<dbReference type="PANTHER" id="PTHR11761">
    <property type="entry name" value="50S/60S RIBOSOMAL PROTEIN L14/L23"/>
    <property type="match status" value="1"/>
</dbReference>
<dbReference type="PANTHER" id="PTHR11761:SF3">
    <property type="entry name" value="LARGE RIBOSOMAL SUBUNIT PROTEIN UL14M"/>
    <property type="match status" value="1"/>
</dbReference>
<dbReference type="Pfam" id="PF00238">
    <property type="entry name" value="Ribosomal_L14"/>
    <property type="match status" value="1"/>
</dbReference>
<dbReference type="SMART" id="SM01374">
    <property type="entry name" value="Ribosomal_L14"/>
    <property type="match status" value="1"/>
</dbReference>
<dbReference type="SUPFAM" id="SSF50193">
    <property type="entry name" value="Ribosomal protein L14"/>
    <property type="match status" value="1"/>
</dbReference>
<dbReference type="PROSITE" id="PS00049">
    <property type="entry name" value="RIBOSOMAL_L14"/>
    <property type="match status" value="1"/>
</dbReference>
<organism>
    <name type="scientific">Pseudoalteromonas atlantica (strain T6c / ATCC BAA-1087)</name>
    <dbReference type="NCBI Taxonomy" id="3042615"/>
    <lineage>
        <taxon>Bacteria</taxon>
        <taxon>Pseudomonadati</taxon>
        <taxon>Pseudomonadota</taxon>
        <taxon>Gammaproteobacteria</taxon>
        <taxon>Alteromonadales</taxon>
        <taxon>Alteromonadaceae</taxon>
        <taxon>Paraglaciecola</taxon>
    </lineage>
</organism>
<name>RL14_PSEA6</name>
<reference key="1">
    <citation type="submission" date="2006-06" db="EMBL/GenBank/DDBJ databases">
        <title>Complete sequence of Pseudoalteromonas atlantica T6c.</title>
        <authorList>
            <consortium name="US DOE Joint Genome Institute"/>
            <person name="Copeland A."/>
            <person name="Lucas S."/>
            <person name="Lapidus A."/>
            <person name="Barry K."/>
            <person name="Detter J.C."/>
            <person name="Glavina del Rio T."/>
            <person name="Hammon N."/>
            <person name="Israni S."/>
            <person name="Dalin E."/>
            <person name="Tice H."/>
            <person name="Pitluck S."/>
            <person name="Saunders E."/>
            <person name="Brettin T."/>
            <person name="Bruce D."/>
            <person name="Han C."/>
            <person name="Tapia R."/>
            <person name="Gilna P."/>
            <person name="Schmutz J."/>
            <person name="Larimer F."/>
            <person name="Land M."/>
            <person name="Hauser L."/>
            <person name="Kyrpides N."/>
            <person name="Kim E."/>
            <person name="Karls A.C."/>
            <person name="Bartlett D."/>
            <person name="Higgins B.P."/>
            <person name="Richardson P."/>
        </authorList>
    </citation>
    <scope>NUCLEOTIDE SEQUENCE [LARGE SCALE GENOMIC DNA]</scope>
    <source>
        <strain>T6c / ATCC BAA-1087</strain>
    </source>
</reference>
<sequence length="121" mass="13285">MIQMQTNLDVADNSGARRVQCIKVLGGSHRRYAHIGDIIKVTVKEAIPRGKVKKGDVLTAVVVRTRKGVRRSDGSSIRFDNNAAVLLNANKQPIGTRIFGPVTRELRVNNMKIVSLAPEVL</sequence>
<gene>
    <name evidence="1" type="primary">rplN</name>
    <name type="ordered locus">Patl_0999</name>
</gene>
<proteinExistence type="inferred from homology"/>
<comment type="function">
    <text evidence="1">Binds to 23S rRNA. Forms part of two intersubunit bridges in the 70S ribosome.</text>
</comment>
<comment type="subunit">
    <text evidence="1">Part of the 50S ribosomal subunit. Forms a cluster with proteins L3 and L19. In the 70S ribosome, L14 and L19 interact and together make contacts with the 16S rRNA in bridges B5 and B8.</text>
</comment>
<comment type="similarity">
    <text evidence="1">Belongs to the universal ribosomal protein uL14 family.</text>
</comment>
<protein>
    <recommendedName>
        <fullName evidence="1">Large ribosomal subunit protein uL14</fullName>
    </recommendedName>
    <alternativeName>
        <fullName evidence="2">50S ribosomal protein L14</fullName>
    </alternativeName>
</protein>
<accession>Q15X63</accession>
<evidence type="ECO:0000255" key="1">
    <source>
        <dbReference type="HAMAP-Rule" id="MF_01367"/>
    </source>
</evidence>
<evidence type="ECO:0000305" key="2"/>